<feature type="chain" id="PRO_0000433175" description="Nucleoporin NSP1">
    <location>
        <begin position="1"/>
        <end position="678"/>
    </location>
</feature>
<feature type="repeat" description="SXFG 1">
    <location>
        <begin position="52"/>
        <end position="55"/>
    </location>
</feature>
<feature type="repeat" description="SXFG 2">
    <location>
        <begin position="64"/>
        <end position="67"/>
    </location>
</feature>
<feature type="repeat" description="SXFG 3">
    <location>
        <begin position="81"/>
        <end position="84"/>
    </location>
</feature>
<feature type="repeat" description="SXFG 4">
    <location>
        <begin position="94"/>
        <end position="97"/>
    </location>
</feature>
<feature type="repeat" description="SXFG 5">
    <location>
        <begin position="125"/>
        <end position="128"/>
    </location>
</feature>
<feature type="repeat" description="SXFG 6">
    <location>
        <begin position="151"/>
        <end position="154"/>
    </location>
</feature>
<feature type="repeat" description="SXFG 7">
    <location>
        <begin position="181"/>
        <end position="184"/>
    </location>
</feature>
<feature type="repeat" description="PXFG 1">
    <location>
        <begin position="203"/>
        <end position="206"/>
    </location>
</feature>
<feature type="repeat" description="PXFG 2">
    <location>
        <begin position="259"/>
        <end position="262"/>
    </location>
</feature>
<feature type="repeat" description="PXFG 3">
    <location>
        <begin position="322"/>
        <end position="325"/>
    </location>
</feature>
<feature type="repeat" description="SXFG 8">
    <location>
        <begin position="388"/>
        <end position="391"/>
    </location>
</feature>
<feature type="region of interest" description="Disordered" evidence="3">
    <location>
        <begin position="1"/>
        <end position="295"/>
    </location>
</feature>
<feature type="region of interest" description="Disordered" evidence="3">
    <location>
        <begin position="324"/>
        <end position="461"/>
    </location>
</feature>
<feature type="coiled-coil region" evidence="2">
    <location>
        <begin position="514"/>
        <end position="606"/>
    </location>
</feature>
<feature type="compositionally biased region" description="Polar residues" evidence="3">
    <location>
        <begin position="1"/>
        <end position="23"/>
    </location>
</feature>
<feature type="compositionally biased region" description="Polar residues" evidence="3">
    <location>
        <begin position="38"/>
        <end position="52"/>
    </location>
</feature>
<feature type="compositionally biased region" description="Polar residues" evidence="3">
    <location>
        <begin position="59"/>
        <end position="68"/>
    </location>
</feature>
<feature type="compositionally biased region" description="Low complexity" evidence="3">
    <location>
        <begin position="69"/>
        <end position="96"/>
    </location>
</feature>
<feature type="compositionally biased region" description="Polar residues" evidence="3">
    <location>
        <begin position="100"/>
        <end position="109"/>
    </location>
</feature>
<feature type="compositionally biased region" description="Low complexity" evidence="3">
    <location>
        <begin position="110"/>
        <end position="170"/>
    </location>
</feature>
<feature type="compositionally biased region" description="Polar residues" evidence="3">
    <location>
        <begin position="174"/>
        <end position="183"/>
    </location>
</feature>
<feature type="compositionally biased region" description="Low complexity" evidence="3">
    <location>
        <begin position="184"/>
        <end position="201"/>
    </location>
</feature>
<feature type="compositionally biased region" description="Low complexity" evidence="3">
    <location>
        <begin position="209"/>
        <end position="226"/>
    </location>
</feature>
<feature type="compositionally biased region" description="Polar residues" evidence="3">
    <location>
        <begin position="233"/>
        <end position="245"/>
    </location>
</feature>
<feature type="compositionally biased region" description="Low complexity" evidence="3">
    <location>
        <begin position="246"/>
        <end position="295"/>
    </location>
</feature>
<feature type="compositionally biased region" description="Low complexity" evidence="3">
    <location>
        <begin position="324"/>
        <end position="446"/>
    </location>
</feature>
<proteinExistence type="evidence at protein level"/>
<keyword id="KW-0002">3D-structure</keyword>
<keyword id="KW-0175">Coiled coil</keyword>
<keyword id="KW-0472">Membrane</keyword>
<keyword id="KW-0509">mRNA transport</keyword>
<keyword id="KW-0906">Nuclear pore complex</keyword>
<keyword id="KW-0539">Nucleus</keyword>
<keyword id="KW-0653">Protein transport</keyword>
<keyword id="KW-1185">Reference proteome</keyword>
<keyword id="KW-0677">Repeat</keyword>
<keyword id="KW-0811">Translocation</keyword>
<keyword id="KW-0813">Transport</keyword>
<protein>
    <recommendedName>
        <fullName evidence="4">Nucleoporin NSP1</fullName>
    </recommendedName>
    <alternativeName>
        <fullName>Nuclear pore protein NSP1</fullName>
    </alternativeName>
    <alternativeName>
        <fullName>Nucleoskeletal-like protein</fullName>
    </alternativeName>
</protein>
<dbReference type="EMBL" id="GL988045">
    <property type="protein sequence ID" value="EGS18829.1"/>
    <property type="molecule type" value="Genomic_DNA"/>
</dbReference>
<dbReference type="EMBL" id="JF276281">
    <property type="protein sequence ID" value="AEL00679.1"/>
    <property type="molecule type" value="Genomic_DNA"/>
</dbReference>
<dbReference type="RefSeq" id="XP_006695774.1">
    <property type="nucleotide sequence ID" value="XM_006695711.1"/>
</dbReference>
<dbReference type="PDB" id="5CWS">
    <property type="method" value="X-ray"/>
    <property type="resolution" value="3.77 A"/>
    <property type="chains" value="C/I=467-674"/>
</dbReference>
<dbReference type="PDBsum" id="5CWS"/>
<dbReference type="SMR" id="G0SBQ3"/>
<dbReference type="DIP" id="DIP-61839N"/>
<dbReference type="IntAct" id="G0SBQ3">
    <property type="interactions" value="6"/>
</dbReference>
<dbReference type="STRING" id="759272.G0SBQ3"/>
<dbReference type="TCDB" id="1.I.1.1.2">
    <property type="family name" value="the nuclear pore complex (npc) family"/>
</dbReference>
<dbReference type="GeneID" id="18259477"/>
<dbReference type="KEGG" id="cthr:CTHT_0054390"/>
<dbReference type="eggNOG" id="KOG2196">
    <property type="taxonomic scope" value="Eukaryota"/>
</dbReference>
<dbReference type="HOGENOM" id="CLU_018823_0_0_1"/>
<dbReference type="OMA" id="EMMSKQV"/>
<dbReference type="OrthoDB" id="344345at2759"/>
<dbReference type="Proteomes" id="UP000008066">
    <property type="component" value="Unassembled WGS sequence"/>
</dbReference>
<dbReference type="GO" id="GO:0031965">
    <property type="term" value="C:nuclear membrane"/>
    <property type="evidence" value="ECO:0007669"/>
    <property type="project" value="UniProtKB-SubCell"/>
</dbReference>
<dbReference type="GO" id="GO:0044613">
    <property type="term" value="C:nuclear pore central transport channel"/>
    <property type="evidence" value="ECO:0007669"/>
    <property type="project" value="TreeGrafter"/>
</dbReference>
<dbReference type="GO" id="GO:0005543">
    <property type="term" value="F:phospholipid binding"/>
    <property type="evidence" value="ECO:0007669"/>
    <property type="project" value="TreeGrafter"/>
</dbReference>
<dbReference type="GO" id="GO:0017056">
    <property type="term" value="F:structural constituent of nuclear pore"/>
    <property type="evidence" value="ECO:0007669"/>
    <property type="project" value="InterPro"/>
</dbReference>
<dbReference type="GO" id="GO:0051028">
    <property type="term" value="P:mRNA transport"/>
    <property type="evidence" value="ECO:0007669"/>
    <property type="project" value="UniProtKB-KW"/>
</dbReference>
<dbReference type="GO" id="GO:0006606">
    <property type="term" value="P:protein import into nucleus"/>
    <property type="evidence" value="ECO:0007669"/>
    <property type="project" value="TreeGrafter"/>
</dbReference>
<dbReference type="GO" id="GO:0006405">
    <property type="term" value="P:RNA export from nucleus"/>
    <property type="evidence" value="ECO:0007669"/>
    <property type="project" value="TreeGrafter"/>
</dbReference>
<dbReference type="FunFam" id="1.20.5.170:FF:000040">
    <property type="entry name" value="Nuclear pore glycoprotein p62"/>
    <property type="match status" value="1"/>
</dbReference>
<dbReference type="Gene3D" id="1.20.5.170">
    <property type="match status" value="1"/>
</dbReference>
<dbReference type="InterPro" id="IPR026010">
    <property type="entry name" value="NSP1/NUP62"/>
</dbReference>
<dbReference type="InterPro" id="IPR025574">
    <property type="entry name" value="Nucleoporin_FG_rpt"/>
</dbReference>
<dbReference type="InterPro" id="IPR007758">
    <property type="entry name" value="Nucleoporin_NSP1_C"/>
</dbReference>
<dbReference type="PANTHER" id="PTHR12084:SF0">
    <property type="entry name" value="NUCLEAR PORE GLYCOPROTEIN P62"/>
    <property type="match status" value="1"/>
</dbReference>
<dbReference type="PANTHER" id="PTHR12084">
    <property type="entry name" value="NUCLEAR PORE GLYCOPROTEIN P62-RELATED"/>
    <property type="match status" value="1"/>
</dbReference>
<dbReference type="Pfam" id="PF05064">
    <property type="entry name" value="Nsp1_C"/>
    <property type="match status" value="1"/>
</dbReference>
<dbReference type="Pfam" id="PF13634">
    <property type="entry name" value="Nucleoporin_FG"/>
    <property type="match status" value="3"/>
</dbReference>
<gene>
    <name type="primary">NSP1</name>
    <name type="ORF">CTHT_0054390</name>
</gene>
<accession>G0SBQ3</accession>
<accession>G0ZGU1</accession>
<organism>
    <name type="scientific">Chaetomium thermophilum (strain DSM 1495 / CBS 144.50 / IMI 039719)</name>
    <name type="common">Thermochaetoides thermophila</name>
    <dbReference type="NCBI Taxonomy" id="759272"/>
    <lineage>
        <taxon>Eukaryota</taxon>
        <taxon>Fungi</taxon>
        <taxon>Dikarya</taxon>
        <taxon>Ascomycota</taxon>
        <taxon>Pezizomycotina</taxon>
        <taxon>Sordariomycetes</taxon>
        <taxon>Sordariomycetidae</taxon>
        <taxon>Sordariales</taxon>
        <taxon>Chaetomiaceae</taxon>
        <taxon>Thermochaetoides</taxon>
    </lineage>
</organism>
<sequence length="678" mass="67121">MSFTFGQPSTSGASGQSNTSTAPASGGLFGSTTGSSTPAFSFGNTSGTQSGSLFGGATTGQKTSLFGNTSSTTPAGTPATSLFGQSTSSSSGPSLFGNASKPSGNLFGNTSTSAAGSSTPAGTPSLFGSKTATTSAGASSTTPAATAGSGSLFGSTTATTQGSSTPTSTGLFGGSSTASKSLFGSTTTPATGTSGSQTTPAKPLFGSFGSTTPAGAPPTDATKTAGLFGNLSKPATTGTSTPTLFGSTSATTQGQSSTPLFGAKPAETSTTTAASGAATPATSAPASTTPTLFGGATLTSSAPAASTSTSTATASTPAATKPLFGATATTSAPGSSTTTATPGLFSTTPATTAAAGSSTATSTLFGTKPATTTAAAASSTPAATSTPSLFGSKPASTTAPASGTPTTTTAPASTSAPATTTAAPTSGASATASTTTAGQDAKTTTAGLGASTVGPQSQLPRLKNKTMDEIITRWATDLAKYQKEFKEQAAKVMEWDRLLVENGEKIQKLYTSTYEAERASNEIERQLSNVESQQEELTAWLDRYERELDELYAKQMGSAAGEQAAGPDQERERTYKLAEKLTDQLDEMGKDLAKMIKEINDMSNTLSKGSKPDDPLTQIVRVLNGHLAQLQWIDTNAAALQAKVAAAQKAAGSMGANVPGTETDAAESFYRSYRGGLK</sequence>
<comment type="function">
    <text evidence="1">Functions as a component of the nuclear pore complex (NPC). NPC components, collectively referred to as nucleoporins (NUPs), can play the role of both NPC structural components and of docking or interaction partners for transiently associated nuclear transport factors. Active directional transport is assured by both, a Phe-Gly (FG) repeat affinity gradient for these transport factors across the NPC and a transport cofactor concentration gradient across the nuclear envelope (GSP1 and GSP2 GTPases associated predominantly with GTP in the nucleus, with GDP in the cytoplasm). NSP1 plays an important role in several nuclear transport pathways including poly(A)+ RNA, tRNA, pre-ribosome, signal recognition particle (SRP), and protein transport.</text>
</comment>
<comment type="subunit">
    <text evidence="1 6">Component of the nuclear pore complex (NPC). NPC constitutes the exclusive means of nucleocytoplasmic transport. NPCs allow the passive diffusion of ions and small molecules and the active, nuclear transport receptor-mediated bidirectional transport of macromolecules such as proteins, RNAs, ribonucleoparticles (RNPs), and ribosomal subunits across the nuclear envelope. Due to its 8-fold rotational symmetry, all subunits are present with 8 copies or multiples thereof.</text>
</comment>
<comment type="subcellular location">
    <subcellularLocation>
        <location evidence="1">Nucleus</location>
        <location evidence="1">Nuclear pore complex</location>
    </subcellularLocation>
    <subcellularLocation>
        <location evidence="1">Nucleus membrane</location>
        <topology evidence="1">Peripheral membrane protein</topology>
        <orientation evidence="1">Cytoplasmic side</orientation>
    </subcellularLocation>
    <subcellularLocation>
        <location evidence="1">Nucleus membrane</location>
        <topology evidence="1">Peripheral membrane protein</topology>
        <orientation evidence="1">Nucleoplasmic side</orientation>
    </subcellularLocation>
    <text evidence="1">Symmetric distribution.</text>
</comment>
<comment type="domain">
    <text evidence="1">Contains FG repeats. FG repeats are interaction sites for karyopherins (importins, exportins) and form probably an affinity gradient, guiding the transport proteins unidirectionally with their cargo through the NPC. FG repeat regions are highly flexible and lack ordered secondary structure. The overall conservation of FG repeats regarding exact sequence, spacing, and repeat unit length is limited. FG repeat types and their physico-chemical environment change across the NPC from the nucleoplasmic to the cytoplasmic side.</text>
</comment>
<comment type="similarity">
    <text evidence="5">Belongs to the nucleoporin NSP1/NUP62 family.</text>
</comment>
<evidence type="ECO:0000250" key="1">
    <source>
        <dbReference type="UniProtKB" id="P14907"/>
    </source>
</evidence>
<evidence type="ECO:0000255" key="2"/>
<evidence type="ECO:0000256" key="3">
    <source>
        <dbReference type="SAM" id="MobiDB-lite"/>
    </source>
</evidence>
<evidence type="ECO:0000303" key="4">
    <source>
    </source>
</evidence>
<evidence type="ECO:0000305" key="5"/>
<evidence type="ECO:0000305" key="6">
    <source>
    </source>
</evidence>
<name>NSP1_CHATD</name>
<reference key="1">
    <citation type="journal article" date="2011" name="Cell">
        <title>Insight into structure and assembly of the nuclear pore complex by utilizing the genome of a eukaryotic thermophile.</title>
        <authorList>
            <person name="Amlacher S."/>
            <person name="Sarges P."/>
            <person name="Flemming D."/>
            <person name="van Noort V."/>
            <person name="Kunze R."/>
            <person name="Devos D.P."/>
            <person name="Arumugam M."/>
            <person name="Bork P."/>
            <person name="Hurt E."/>
        </authorList>
    </citation>
    <scope>NUCLEOTIDE SEQUENCE [LARGE SCALE GENOMIC DNA]</scope>
    <source>
        <strain>DSM 1495 / CBS 144.50 / IMI 039719</strain>
    </source>
</reference>